<dbReference type="EC" id="3.2.1.26" evidence="4"/>
<dbReference type="EMBL" id="D10265">
    <property type="protein sequence ID" value="BAA01107.1"/>
    <property type="molecule type" value="mRNA"/>
</dbReference>
<dbReference type="RefSeq" id="NP_001304253.1">
    <property type="nucleotide sequence ID" value="NM_001317324.1"/>
</dbReference>
<dbReference type="SMR" id="P29001"/>
<dbReference type="STRING" id="3916.P29001"/>
<dbReference type="CAZy" id="GH32">
    <property type="family name" value="Glycoside Hydrolase Family 32"/>
</dbReference>
<dbReference type="GlyCosmos" id="P29001">
    <property type="glycosylation" value="3 sites, No reported glycans"/>
</dbReference>
<dbReference type="GeneID" id="106768621"/>
<dbReference type="KEGG" id="vra:106768621"/>
<dbReference type="OrthoDB" id="202537at2759"/>
<dbReference type="SABIO-RK" id="P29001"/>
<dbReference type="UniPathway" id="UPA00238"/>
<dbReference type="Proteomes" id="UP000087766">
    <property type="component" value="Chromosome 7"/>
</dbReference>
<dbReference type="GO" id="GO:0016020">
    <property type="term" value="C:membrane"/>
    <property type="evidence" value="ECO:0007669"/>
    <property type="project" value="UniProtKB-SubCell"/>
</dbReference>
<dbReference type="GO" id="GO:0005775">
    <property type="term" value="C:vacuolar lumen"/>
    <property type="evidence" value="ECO:0007669"/>
    <property type="project" value="UniProtKB-SubCell"/>
</dbReference>
<dbReference type="GO" id="GO:0004564">
    <property type="term" value="F:beta-fructofuranosidase activity"/>
    <property type="evidence" value="ECO:0007669"/>
    <property type="project" value="UniProtKB-EC"/>
</dbReference>
<dbReference type="GO" id="GO:0005985">
    <property type="term" value="P:sucrose metabolic process"/>
    <property type="evidence" value="ECO:0007669"/>
    <property type="project" value="UniProtKB-UniPathway"/>
</dbReference>
<dbReference type="CDD" id="cd18624">
    <property type="entry name" value="GH32_Fruct1-like"/>
    <property type="match status" value="1"/>
</dbReference>
<dbReference type="FunFam" id="2.115.10.20:FF:000001">
    <property type="entry name" value="Beta-fructofuranosidase, insoluble isoenzyme CWINV1"/>
    <property type="match status" value="1"/>
</dbReference>
<dbReference type="FunFam" id="2.60.120.560:FF:000002">
    <property type="entry name" value="Beta-fructofuranosidase, insoluble isoenzyme CWINV1"/>
    <property type="match status" value="1"/>
</dbReference>
<dbReference type="Gene3D" id="2.60.120.560">
    <property type="entry name" value="Exo-inulinase, domain 1"/>
    <property type="match status" value="1"/>
</dbReference>
<dbReference type="Gene3D" id="2.115.10.20">
    <property type="entry name" value="Glycosyl hydrolase domain, family 43"/>
    <property type="match status" value="1"/>
</dbReference>
<dbReference type="InterPro" id="IPR021792">
    <property type="entry name" value="Beta-fructofuranosidase_N"/>
</dbReference>
<dbReference type="InterPro" id="IPR013320">
    <property type="entry name" value="ConA-like_dom_sf"/>
</dbReference>
<dbReference type="InterPro" id="IPR050551">
    <property type="entry name" value="Fructan_Metab_Enzymes"/>
</dbReference>
<dbReference type="InterPro" id="IPR001362">
    <property type="entry name" value="Glyco_hydro_32"/>
</dbReference>
<dbReference type="InterPro" id="IPR018053">
    <property type="entry name" value="Glyco_hydro_32_AS"/>
</dbReference>
<dbReference type="InterPro" id="IPR013189">
    <property type="entry name" value="Glyco_hydro_32_C"/>
</dbReference>
<dbReference type="InterPro" id="IPR013148">
    <property type="entry name" value="Glyco_hydro_32_N"/>
</dbReference>
<dbReference type="InterPro" id="IPR023296">
    <property type="entry name" value="Glyco_hydro_beta-prop_sf"/>
</dbReference>
<dbReference type="PANTHER" id="PTHR31953">
    <property type="entry name" value="BETA-FRUCTOFURANOSIDASE, INSOLUBLE ISOENZYME CWINV1-RELATED"/>
    <property type="match status" value="1"/>
</dbReference>
<dbReference type="Pfam" id="PF08244">
    <property type="entry name" value="Glyco_hydro_32C"/>
    <property type="match status" value="1"/>
</dbReference>
<dbReference type="Pfam" id="PF00251">
    <property type="entry name" value="Glyco_hydro_32N"/>
    <property type="match status" value="1"/>
</dbReference>
<dbReference type="Pfam" id="PF11837">
    <property type="entry name" value="INV_N"/>
    <property type="match status" value="1"/>
</dbReference>
<dbReference type="SMART" id="SM00640">
    <property type="entry name" value="Glyco_32"/>
    <property type="match status" value="1"/>
</dbReference>
<dbReference type="SUPFAM" id="SSF75005">
    <property type="entry name" value="Arabinanase/levansucrase/invertase"/>
    <property type="match status" value="1"/>
</dbReference>
<dbReference type="SUPFAM" id="SSF49899">
    <property type="entry name" value="Concanavalin A-like lectins/glucanases"/>
    <property type="match status" value="1"/>
</dbReference>
<dbReference type="PROSITE" id="PS00609">
    <property type="entry name" value="GLYCOSYL_HYDROL_F32"/>
    <property type="match status" value="1"/>
</dbReference>
<gene>
    <name type="primary">INVA</name>
</gene>
<feature type="propeptide" id="PRO_0000033386" description="Removed in mature form" evidence="6">
    <location>
        <begin position="1"/>
        <end position="101"/>
    </location>
</feature>
<feature type="chain" id="PRO_0000438789" description="Acid beta-fructofuranosidase 70 kDa monomer">
    <location>
        <begin position="102"/>
        <end position="649"/>
    </location>
</feature>
<feature type="chain" id="PRO_0000033387" description="Acid beta-fructofuranosidase 30 kDa subunit">
    <location>
        <begin position="102"/>
        <end position="328"/>
    </location>
</feature>
<feature type="chain" id="PRO_0000033388" description="Acid beta-fructofuranosidase 38 kDa subunit">
    <location>
        <begin position="329"/>
        <end position="649"/>
    </location>
</feature>
<feature type="topological domain" description="Cytoplasmic" evidence="8">
    <location>
        <begin position="1"/>
        <end position="22"/>
    </location>
</feature>
<feature type="transmembrane region" description="Helical; Signal-anchor for type II membrane protein" evidence="3">
    <location>
        <begin position="23"/>
        <end position="43"/>
    </location>
</feature>
<feature type="topological domain" description="Lumenal" evidence="8">
    <location>
        <begin position="44"/>
        <end position="649"/>
    </location>
</feature>
<feature type="region of interest" description="Disordered" evidence="5">
    <location>
        <begin position="52"/>
        <end position="75"/>
    </location>
</feature>
<feature type="compositionally biased region" description="Polar residues" evidence="5">
    <location>
        <begin position="54"/>
        <end position="72"/>
    </location>
</feature>
<feature type="active site" evidence="4">
    <location>
        <position position="130"/>
    </location>
</feature>
<feature type="binding site" evidence="2">
    <location>
        <begin position="127"/>
        <end position="130"/>
    </location>
    <ligand>
        <name>substrate</name>
    </ligand>
</feature>
<feature type="binding site" evidence="2">
    <location>
        <position position="146"/>
    </location>
    <ligand>
        <name>substrate</name>
    </ligand>
</feature>
<feature type="binding site" evidence="2">
    <location>
        <position position="154"/>
    </location>
    <ligand>
        <name>substrate</name>
    </ligand>
</feature>
<feature type="binding site" evidence="2">
    <location>
        <begin position="189"/>
        <end position="190"/>
    </location>
    <ligand>
        <name>substrate</name>
    </ligand>
</feature>
<feature type="binding site" evidence="2">
    <location>
        <begin position="253"/>
        <end position="254"/>
    </location>
    <ligand>
        <name>substrate</name>
    </ligand>
</feature>
<feature type="binding site" evidence="2">
    <location>
        <position position="308"/>
    </location>
    <ligand>
        <name>substrate</name>
    </ligand>
</feature>
<feature type="binding site" evidence="2">
    <location>
        <position position="341"/>
    </location>
    <ligand>
        <name>substrate</name>
    </ligand>
</feature>
<feature type="glycosylation site" description="N-linked (GlcNAc...) (complex) asparagine" evidence="3">
    <location>
        <position position="210"/>
    </location>
</feature>
<feature type="glycosylation site" description="N-linked (GlcNAc...) (complex) asparagine" evidence="3">
    <location>
        <position position="275"/>
    </location>
</feature>
<feature type="glycosylation site" description="N-linked (GlcNAc...) (high mannose) asparagine" evidence="3">
    <location>
        <position position="618"/>
    </location>
</feature>
<feature type="disulfide bond" evidence="2">
    <location>
        <begin position="498"/>
        <end position="546"/>
    </location>
</feature>
<sequence>MEHHKPLLPTSSHAAPTSSTRKDLLFVLCGLLFLSSLVAYGGYRASGVPHAHLSSPTSNHQQDHQSPTSLPSSKWYPVSRGVSSGVSEKSSNLLFAGEGGASEAFPWDNSMLSWQRTSFHFQPEKNWMNDPNGPMYYKGWYHFFYQYNPNGAVWGDIVWGHAVSRDMIHWLHLPLAMVADQWYDKQGVWTGSATILPNGEIIMLYTGSTNESVQVQNLAYPADPSDPLLLDWIKHTGNPVLVPPPGIGAKDFRDPTTAWLTSEGKWRITIGSKLNKTGIALVYDTEDFKTYELKEGLLRAVPGTGMWECVDFFPVSKKNGNGLDTSVNGAEVKHVMKVSLDDDRHDYYAIGTYDDNKVLFTPDDVKNDVGVGLRYDYGIFYASKTFYDQNKDRRILWGWIGESDSEYADVTKGWASVQSIPRTVRLDTKTGSNLLQWPVDEVESLRLRSDEFKSLKAKPGSVVSLDIETATQLDVVAEFEIDTESLEKTAESNEEFTCSSSGGAAQRGALGPFGLLVLADEGLSEYTPVYFYVIKGRNGNLRTSFCSDQSRSSQANDVRKQIFGSVVPVLKGEKFSLRMLVDHSIVESFAQGGRTCVTSRVYPTKAIYGAARLFLFNNATEATVTASLKVWQMNSAFIRPFPFNPDQKS</sequence>
<accession>P29001</accession>
<proteinExistence type="evidence at protein level"/>
<reference key="1">
    <citation type="journal article" date="1992" name="Plant Cell Physiol.">
        <title>Cloning and sequence of cDNAs for an intracellular acid invertase from etiolated hypocotyls of mung bean and expression of the gene during growth of seedlings.</title>
        <authorList>
            <person name="Arai M."/>
            <person name="Mori H."/>
            <person name="Imaseki H."/>
        </authorList>
    </citation>
    <scope>NUCLEOTIDE SEQUENCE [MRNA]</scope>
    <scope>PROTEIN SEQUENCE OF 329-360</scope>
    <scope>SUBUNIT</scope>
    <scope>DEVELOPMENTAL STAGE</scope>
    <scope>INDUCTION</scope>
    <source>
        <tissue>Hypocotyl</tissue>
    </source>
</reference>
<protein>
    <recommendedName>
        <fullName evidence="7">Acid beta-fructofuranosidase</fullName>
        <ecNumber evidence="4">3.2.1.26</ecNumber>
    </recommendedName>
    <alternativeName>
        <fullName evidence="7">Acid invertase</fullName>
        <shortName evidence="7">AI</shortName>
    </alternativeName>
    <alternativeName>
        <fullName>Acid sucrose hydrolase</fullName>
    </alternativeName>
    <alternativeName>
        <fullName>Vacuolar invertase</fullName>
    </alternativeName>
    <component>
        <recommendedName>
            <fullName evidence="7">Acid beta-fructofuranosidase 30 kDa subunit</fullName>
        </recommendedName>
    </component>
    <component>
        <recommendedName>
            <fullName evidence="7">Acid beta-fructofuranosidase 38 kDa subunit</fullName>
        </recommendedName>
    </component>
    <component>
        <recommendedName>
            <fullName evidence="7">Acid beta-fructofuranosidase 70 kDa monomer</fullName>
        </recommendedName>
    </component>
</protein>
<comment type="function">
    <text evidence="9">Possible role in the continued mobilization of sucrose to sink organs.</text>
</comment>
<comment type="catalytic activity">
    <reaction evidence="4">
        <text>Hydrolysis of terminal non-reducing beta-D-fructofuranoside residues in beta-D-fructofuranosides.</text>
        <dbReference type="EC" id="3.2.1.26"/>
    </reaction>
</comment>
<comment type="pathway">
    <text evidence="8">Glycan biosynthesis; sucrose metabolism.</text>
</comment>
<comment type="subunit">
    <text evidence="6">Present in two forms, a 70 kDa monomer and a heterodimer of the 30 kDa and 38 kDa subunits. The ratio of the levels of the two forms within cells appears to be regulated developmentally.</text>
</comment>
<comment type="subcellular location">
    <subcellularLocation>
        <location evidence="3">Membrane</location>
        <topology evidence="3">Single-pass type II membrane protein</topology>
    </subcellularLocation>
    <subcellularLocation>
        <location evidence="1">Vacuole lumen</location>
    </subcellularLocation>
    <text evidence="1">May be released into the lumen of the vacuole from the tonoplast through a proteolytic processing.</text>
</comment>
<comment type="developmental stage">
    <text evidence="6">Appears after germination and maintained at high levels in rapidly growing tissues.</text>
</comment>
<comment type="induction">
    <text evidence="6">Regulation of synthesis appears to be related to the growth of seedlings.</text>
</comment>
<comment type="similarity">
    <text evidence="8">Belongs to the glycosyl hydrolase 32 family.</text>
</comment>
<organism>
    <name type="scientific">Vigna radiata var. radiata</name>
    <name type="common">Mung bean</name>
    <name type="synonym">Phaseolus aureus</name>
    <dbReference type="NCBI Taxonomy" id="3916"/>
    <lineage>
        <taxon>Eukaryota</taxon>
        <taxon>Viridiplantae</taxon>
        <taxon>Streptophyta</taxon>
        <taxon>Embryophyta</taxon>
        <taxon>Tracheophyta</taxon>
        <taxon>Spermatophyta</taxon>
        <taxon>Magnoliopsida</taxon>
        <taxon>eudicotyledons</taxon>
        <taxon>Gunneridae</taxon>
        <taxon>Pentapetalae</taxon>
        <taxon>rosids</taxon>
        <taxon>fabids</taxon>
        <taxon>Fabales</taxon>
        <taxon>Fabaceae</taxon>
        <taxon>Papilionoideae</taxon>
        <taxon>50 kb inversion clade</taxon>
        <taxon>NPAAA clade</taxon>
        <taxon>indigoferoid/millettioid clade</taxon>
        <taxon>Phaseoleae</taxon>
        <taxon>Vigna</taxon>
    </lineage>
</organism>
<name>INVA_VIGRR</name>
<evidence type="ECO:0000250" key="1">
    <source>
        <dbReference type="UniProtKB" id="Q39041"/>
    </source>
</evidence>
<evidence type="ECO:0000250" key="2">
    <source>
        <dbReference type="UniProtKB" id="Q43866"/>
    </source>
</evidence>
<evidence type="ECO:0000255" key="3"/>
<evidence type="ECO:0000255" key="4">
    <source>
        <dbReference type="PROSITE-ProRule" id="PRU10067"/>
    </source>
</evidence>
<evidence type="ECO:0000256" key="5">
    <source>
        <dbReference type="SAM" id="MobiDB-lite"/>
    </source>
</evidence>
<evidence type="ECO:0000269" key="6">
    <source ref="1"/>
</evidence>
<evidence type="ECO:0000303" key="7">
    <source ref="1"/>
</evidence>
<evidence type="ECO:0000305" key="8"/>
<evidence type="ECO:0000305" key="9">
    <source ref="1"/>
</evidence>
<keyword id="KW-0903">Direct protein sequencing</keyword>
<keyword id="KW-1015">Disulfide bond</keyword>
<keyword id="KW-0325">Glycoprotein</keyword>
<keyword id="KW-0326">Glycosidase</keyword>
<keyword id="KW-0378">Hydrolase</keyword>
<keyword id="KW-0472">Membrane</keyword>
<keyword id="KW-1185">Reference proteome</keyword>
<keyword id="KW-0735">Signal-anchor</keyword>
<keyword id="KW-0812">Transmembrane</keyword>
<keyword id="KW-1133">Transmembrane helix</keyword>
<keyword id="KW-0926">Vacuole</keyword>
<keyword id="KW-0865">Zymogen</keyword>